<protein>
    <recommendedName>
        <fullName evidence="1">Photosystem II reaction center protein J</fullName>
        <shortName evidence="1">PSII-J</shortName>
    </recommendedName>
</protein>
<evidence type="ECO:0000255" key="1">
    <source>
        <dbReference type="HAMAP-Rule" id="MF_01305"/>
    </source>
</evidence>
<organism>
    <name type="scientific">Coffea arabica</name>
    <name type="common">Arabian coffee</name>
    <dbReference type="NCBI Taxonomy" id="13443"/>
    <lineage>
        <taxon>Eukaryota</taxon>
        <taxon>Viridiplantae</taxon>
        <taxon>Streptophyta</taxon>
        <taxon>Embryophyta</taxon>
        <taxon>Tracheophyta</taxon>
        <taxon>Spermatophyta</taxon>
        <taxon>Magnoliopsida</taxon>
        <taxon>eudicotyledons</taxon>
        <taxon>Gunneridae</taxon>
        <taxon>Pentapetalae</taxon>
        <taxon>asterids</taxon>
        <taxon>lamiids</taxon>
        <taxon>Gentianales</taxon>
        <taxon>Rubiaceae</taxon>
        <taxon>Ixoroideae</taxon>
        <taxon>Gardenieae complex</taxon>
        <taxon>Bertiereae - Coffeeae clade</taxon>
        <taxon>Coffeeae</taxon>
        <taxon>Coffea</taxon>
    </lineage>
</organism>
<feature type="chain" id="PRO_0000276090" description="Photosystem II reaction center protein J">
    <location>
        <begin position="1"/>
        <end position="40"/>
    </location>
</feature>
<feature type="transmembrane region" description="Helical" evidence="1">
    <location>
        <begin position="8"/>
        <end position="28"/>
    </location>
</feature>
<geneLocation type="chloroplast"/>
<comment type="function">
    <text evidence="1">One of the components of the core complex of photosystem II (PSII). PSII is a light-driven water:plastoquinone oxidoreductase that uses light energy to abstract electrons from H(2)O, generating O(2) and a proton gradient subsequently used for ATP formation. It consists of a core antenna complex that captures photons, and an electron transfer chain that converts photonic excitation into a charge separation.</text>
</comment>
<comment type="subunit">
    <text evidence="1">PSII is composed of 1 copy each of membrane proteins PsbA, PsbB, PsbC, PsbD, PsbE, PsbF, PsbH, PsbI, PsbJ, PsbK, PsbL, PsbM, PsbT, PsbX, PsbY, PsbZ, Psb30/Ycf12, at least 3 peripheral proteins of the oxygen-evolving complex and a large number of cofactors. It forms dimeric complexes.</text>
</comment>
<comment type="subcellular location">
    <subcellularLocation>
        <location evidence="1">Plastid</location>
        <location evidence="1">Chloroplast thylakoid membrane</location>
        <topology evidence="1">Single-pass membrane protein</topology>
    </subcellularLocation>
</comment>
<comment type="similarity">
    <text evidence="1">Belongs to the PsbJ family.</text>
</comment>
<dbReference type="EMBL" id="EF044213">
    <property type="protein sequence ID" value="ABJ89693.1"/>
    <property type="molecule type" value="Genomic_DNA"/>
</dbReference>
<dbReference type="RefSeq" id="YP_817496.1">
    <property type="nucleotide sequence ID" value="NC_008535.1"/>
</dbReference>
<dbReference type="SMR" id="A0A349"/>
<dbReference type="GeneID" id="4421777"/>
<dbReference type="Proteomes" id="UP000515148">
    <property type="component" value="Chloroplast Pltd"/>
</dbReference>
<dbReference type="GO" id="GO:0009535">
    <property type="term" value="C:chloroplast thylakoid membrane"/>
    <property type="evidence" value="ECO:0007669"/>
    <property type="project" value="UniProtKB-SubCell"/>
</dbReference>
<dbReference type="GO" id="GO:0009539">
    <property type="term" value="C:photosystem II reaction center"/>
    <property type="evidence" value="ECO:0007669"/>
    <property type="project" value="InterPro"/>
</dbReference>
<dbReference type="GO" id="GO:0015979">
    <property type="term" value="P:photosynthesis"/>
    <property type="evidence" value="ECO:0007669"/>
    <property type="project" value="UniProtKB-UniRule"/>
</dbReference>
<dbReference type="Gene3D" id="6.10.250.2070">
    <property type="match status" value="1"/>
</dbReference>
<dbReference type="HAMAP" id="MF_01305">
    <property type="entry name" value="PSII_PsbJ"/>
    <property type="match status" value="1"/>
</dbReference>
<dbReference type="InterPro" id="IPR002682">
    <property type="entry name" value="PSII_PsbJ"/>
</dbReference>
<dbReference type="InterPro" id="IPR037267">
    <property type="entry name" value="PSII_PsbJ_sf"/>
</dbReference>
<dbReference type="NCBIfam" id="NF002722">
    <property type="entry name" value="PRK02565.1"/>
    <property type="match status" value="1"/>
</dbReference>
<dbReference type="PANTHER" id="PTHR34812">
    <property type="entry name" value="PHOTOSYSTEM II REACTION CENTER PROTEIN J"/>
    <property type="match status" value="1"/>
</dbReference>
<dbReference type="PANTHER" id="PTHR34812:SF3">
    <property type="entry name" value="PHOTOSYSTEM II REACTION CENTER PROTEIN J"/>
    <property type="match status" value="1"/>
</dbReference>
<dbReference type="Pfam" id="PF01788">
    <property type="entry name" value="PsbJ"/>
    <property type="match status" value="1"/>
</dbReference>
<dbReference type="SUPFAM" id="SSF161021">
    <property type="entry name" value="Photosystem II reaction center protein J, PsbJ"/>
    <property type="match status" value="1"/>
</dbReference>
<proteinExistence type="inferred from homology"/>
<name>PSBJ_COFAR</name>
<keyword id="KW-0150">Chloroplast</keyword>
<keyword id="KW-0472">Membrane</keyword>
<keyword id="KW-0602">Photosynthesis</keyword>
<keyword id="KW-0604">Photosystem II</keyword>
<keyword id="KW-0934">Plastid</keyword>
<keyword id="KW-0674">Reaction center</keyword>
<keyword id="KW-1185">Reference proteome</keyword>
<keyword id="KW-0793">Thylakoid</keyword>
<keyword id="KW-0812">Transmembrane</keyword>
<keyword id="KW-1133">Transmembrane helix</keyword>
<sequence>MADTTGRIPLWIVGTVTGILVIGLIGVFFYGSYSGLGSSL</sequence>
<accession>A0A349</accession>
<gene>
    <name evidence="1" type="primary">psbJ</name>
</gene>
<reference key="1">
    <citation type="journal article" date="2007" name="Plant Biotechnol. J.">
        <title>The complete nucleotide sequence of the coffee (Coffea arabica L.) chloroplast genome: organization and implications for biotechnology and phylogenetic relationships amongst angiosperms.</title>
        <authorList>
            <person name="Samson N."/>
            <person name="Bausher M.G."/>
            <person name="Lee S.-B."/>
            <person name="Jansen R.K."/>
            <person name="Daniell H."/>
        </authorList>
    </citation>
    <scope>NUCLEOTIDE SEQUENCE [LARGE SCALE GENOMIC DNA]</scope>
</reference>